<organism>
    <name type="scientific">Thermoanaerobacter pseudethanolicus (strain ATCC 33223 / 39E)</name>
    <name type="common">Clostridium thermohydrosulfuricum</name>
    <dbReference type="NCBI Taxonomy" id="340099"/>
    <lineage>
        <taxon>Bacteria</taxon>
        <taxon>Bacillati</taxon>
        <taxon>Bacillota</taxon>
        <taxon>Clostridia</taxon>
        <taxon>Thermoanaerobacterales</taxon>
        <taxon>Thermoanaerobacteraceae</taxon>
        <taxon>Thermoanaerobacter</taxon>
    </lineage>
</organism>
<accession>B0KCE9</accession>
<feature type="chain" id="PRO_1000093596" description="Sugar fermentation stimulation protein homolog">
    <location>
        <begin position="1"/>
        <end position="230"/>
    </location>
</feature>
<reference key="1">
    <citation type="submission" date="2008-01" db="EMBL/GenBank/DDBJ databases">
        <title>Complete sequence of Thermoanaerobacter pseudethanolicus 39E.</title>
        <authorList>
            <person name="Copeland A."/>
            <person name="Lucas S."/>
            <person name="Lapidus A."/>
            <person name="Barry K."/>
            <person name="Glavina del Rio T."/>
            <person name="Dalin E."/>
            <person name="Tice H."/>
            <person name="Pitluck S."/>
            <person name="Bruce D."/>
            <person name="Goodwin L."/>
            <person name="Saunders E."/>
            <person name="Brettin T."/>
            <person name="Detter J.C."/>
            <person name="Han C."/>
            <person name="Schmutz J."/>
            <person name="Larimer F."/>
            <person name="Land M."/>
            <person name="Hauser L."/>
            <person name="Kyrpides N."/>
            <person name="Lykidis A."/>
            <person name="Hemme C."/>
            <person name="Fields M.W."/>
            <person name="He Z."/>
            <person name="Zhou J."/>
            <person name="Richardson P."/>
        </authorList>
    </citation>
    <scope>NUCLEOTIDE SEQUENCE [LARGE SCALE GENOMIC DNA]</scope>
    <source>
        <strain>ATCC 33223 / DSM 2355 / 39E</strain>
    </source>
</reference>
<gene>
    <name evidence="1" type="primary">sfsA</name>
    <name type="ordered locus">Teth39_0323</name>
</gene>
<sequence length="230" mass="26254">MVITNPIVYGKFIKRINRFEAYVELNSGEKTLVHVPNTGRCKEIFVPGAEVILEVRDRQGRKTPYELAFAYKGKRLISIDSQVPNKVVLESIKMGLIEEFKGYDIVEKEKTFGNSKFDIKLTKGKEICYVEVKGVTLEVEGVAKFPDAPTERGRKHLKELIKVKKEGMRAAVIFLIQMDDIKYFTPNDEQDPEFGKFLREAVGKGVEAYAYTCDVGENYVFLKDRVEVVL</sequence>
<evidence type="ECO:0000255" key="1">
    <source>
        <dbReference type="HAMAP-Rule" id="MF_00095"/>
    </source>
</evidence>
<proteinExistence type="inferred from homology"/>
<name>SFSA_THEP3</name>
<comment type="similarity">
    <text evidence="1">Belongs to the SfsA family.</text>
</comment>
<keyword id="KW-1185">Reference proteome</keyword>
<dbReference type="EMBL" id="CP000924">
    <property type="protein sequence ID" value="ABY93992.1"/>
    <property type="molecule type" value="Genomic_DNA"/>
</dbReference>
<dbReference type="RefSeq" id="WP_009052979.1">
    <property type="nucleotide sequence ID" value="NC_010321.1"/>
</dbReference>
<dbReference type="SMR" id="B0KCE9"/>
<dbReference type="STRING" id="340099.Teth39_0323"/>
<dbReference type="KEGG" id="tpd:Teth39_0323"/>
<dbReference type="eggNOG" id="COG1489">
    <property type="taxonomic scope" value="Bacteria"/>
</dbReference>
<dbReference type="HOGENOM" id="CLU_052299_1_0_9"/>
<dbReference type="Proteomes" id="UP000002156">
    <property type="component" value="Chromosome"/>
</dbReference>
<dbReference type="GO" id="GO:0003677">
    <property type="term" value="F:DNA binding"/>
    <property type="evidence" value="ECO:0007669"/>
    <property type="project" value="InterPro"/>
</dbReference>
<dbReference type="CDD" id="cd22359">
    <property type="entry name" value="SfsA-like_bacterial"/>
    <property type="match status" value="1"/>
</dbReference>
<dbReference type="Gene3D" id="2.40.50.580">
    <property type="match status" value="1"/>
</dbReference>
<dbReference type="Gene3D" id="3.40.1350.60">
    <property type="match status" value="1"/>
</dbReference>
<dbReference type="HAMAP" id="MF_00095">
    <property type="entry name" value="SfsA"/>
    <property type="match status" value="1"/>
</dbReference>
<dbReference type="InterPro" id="IPR005224">
    <property type="entry name" value="SfsA"/>
</dbReference>
<dbReference type="InterPro" id="IPR040452">
    <property type="entry name" value="SfsA_C"/>
</dbReference>
<dbReference type="InterPro" id="IPR041465">
    <property type="entry name" value="SfsA_N"/>
</dbReference>
<dbReference type="NCBIfam" id="TIGR00230">
    <property type="entry name" value="sfsA"/>
    <property type="match status" value="1"/>
</dbReference>
<dbReference type="PANTHER" id="PTHR30545">
    <property type="entry name" value="SUGAR FERMENTATION STIMULATION PROTEIN A"/>
    <property type="match status" value="1"/>
</dbReference>
<dbReference type="PANTHER" id="PTHR30545:SF2">
    <property type="entry name" value="SUGAR FERMENTATION STIMULATION PROTEIN A"/>
    <property type="match status" value="1"/>
</dbReference>
<dbReference type="Pfam" id="PF03749">
    <property type="entry name" value="SfsA"/>
    <property type="match status" value="1"/>
</dbReference>
<dbReference type="Pfam" id="PF17746">
    <property type="entry name" value="SfsA_N"/>
    <property type="match status" value="1"/>
</dbReference>
<protein>
    <recommendedName>
        <fullName evidence="1">Sugar fermentation stimulation protein homolog</fullName>
    </recommendedName>
</protein>